<organism>
    <name type="scientific">Escherichia fergusonii (strain ATCC 35469 / DSM 13698 / CCUG 18766 / IAM 14443 / JCM 21226 / LMG 7866 / NBRC 102419 / NCTC 12128 / CDC 0568-73)</name>
    <dbReference type="NCBI Taxonomy" id="585054"/>
    <lineage>
        <taxon>Bacteria</taxon>
        <taxon>Pseudomonadati</taxon>
        <taxon>Pseudomonadota</taxon>
        <taxon>Gammaproteobacteria</taxon>
        <taxon>Enterobacterales</taxon>
        <taxon>Enterobacteriaceae</taxon>
        <taxon>Escherichia</taxon>
    </lineage>
</organism>
<dbReference type="EMBL" id="CU928158">
    <property type="protein sequence ID" value="CAQ91673.1"/>
    <property type="molecule type" value="Genomic_DNA"/>
</dbReference>
<dbReference type="RefSeq" id="WP_001296681.1">
    <property type="nucleotide sequence ID" value="NC_011740.1"/>
</dbReference>
<dbReference type="SMR" id="B7LLY3"/>
<dbReference type="GeneID" id="93777622"/>
<dbReference type="KEGG" id="efe:EFER_4254"/>
<dbReference type="HOGENOM" id="CLU_166075_0_0_6"/>
<dbReference type="OrthoDB" id="9180733at2"/>
<dbReference type="Proteomes" id="UP000000745">
    <property type="component" value="Chromosome"/>
</dbReference>
<dbReference type="GO" id="GO:1990077">
    <property type="term" value="C:primosome complex"/>
    <property type="evidence" value="ECO:0007669"/>
    <property type="project" value="UniProtKB-KW"/>
</dbReference>
<dbReference type="GO" id="GO:0003697">
    <property type="term" value="F:single-stranded DNA binding"/>
    <property type="evidence" value="ECO:0007669"/>
    <property type="project" value="UniProtKB-UniRule"/>
</dbReference>
<dbReference type="GO" id="GO:0006269">
    <property type="term" value="P:DNA replication, synthesis of primer"/>
    <property type="evidence" value="ECO:0007669"/>
    <property type="project" value="UniProtKB-KW"/>
</dbReference>
<dbReference type="CDD" id="cd04496">
    <property type="entry name" value="SSB_OBF"/>
    <property type="match status" value="1"/>
</dbReference>
<dbReference type="FunFam" id="2.40.50.140:FF:000077">
    <property type="entry name" value="Primosomal replication protein N"/>
    <property type="match status" value="1"/>
</dbReference>
<dbReference type="Gene3D" id="2.40.50.140">
    <property type="entry name" value="Nucleic acid-binding proteins"/>
    <property type="match status" value="1"/>
</dbReference>
<dbReference type="HAMAP" id="MF_00720">
    <property type="entry name" value="PriB"/>
    <property type="match status" value="1"/>
</dbReference>
<dbReference type="InterPro" id="IPR012340">
    <property type="entry name" value="NA-bd_OB-fold"/>
</dbReference>
<dbReference type="InterPro" id="IPR000424">
    <property type="entry name" value="Primosome_PriB/ssb"/>
</dbReference>
<dbReference type="InterPro" id="IPR023646">
    <property type="entry name" value="Prisomal_replication_PriB"/>
</dbReference>
<dbReference type="NCBIfam" id="TIGR04418">
    <property type="entry name" value="PriB_gamma"/>
    <property type="match status" value="1"/>
</dbReference>
<dbReference type="Pfam" id="PF22657">
    <property type="entry name" value="SSB_1"/>
    <property type="match status" value="1"/>
</dbReference>
<dbReference type="PIRSF" id="PIRSF003135">
    <property type="entry name" value="Primosomal_n"/>
    <property type="match status" value="1"/>
</dbReference>
<dbReference type="SUPFAM" id="SSF50249">
    <property type="entry name" value="Nucleic acid-binding proteins"/>
    <property type="match status" value="1"/>
</dbReference>
<dbReference type="PROSITE" id="PS50935">
    <property type="entry name" value="SSB"/>
    <property type="match status" value="1"/>
</dbReference>
<name>PRIB_ESCF3</name>
<comment type="function">
    <text evidence="1">Involved in the restart of stalled replication forks, which reloads the replicative helicase on sites other than the origin of replication; the PriA-PriB pathway is the major replication restart pathway. During primosome assembly it facilitates complex formation between PriA and DnaT on DNA; stabilizes PriA on DNA. Stimulates the DNA unwinding activity of PriA helicase.</text>
</comment>
<comment type="subunit">
    <text evidence="1">Homodimer. Interacts with PriA and DnaT. Component of the replication restart primosome. Primosome assembly occurs via a 'hand-off' mechanism. PriA binds to replication forks, subsequently PriB then DnaT bind; DnaT then displaces ssDNA to generate the helicase loading substrate.</text>
</comment>
<comment type="similarity">
    <text evidence="1">Belongs to the PriB family.</text>
</comment>
<protein>
    <recommendedName>
        <fullName evidence="1">Replication restart protein PriB</fullName>
    </recommendedName>
</protein>
<reference key="1">
    <citation type="journal article" date="2009" name="PLoS Genet.">
        <title>Organised genome dynamics in the Escherichia coli species results in highly diverse adaptive paths.</title>
        <authorList>
            <person name="Touchon M."/>
            <person name="Hoede C."/>
            <person name="Tenaillon O."/>
            <person name="Barbe V."/>
            <person name="Baeriswyl S."/>
            <person name="Bidet P."/>
            <person name="Bingen E."/>
            <person name="Bonacorsi S."/>
            <person name="Bouchier C."/>
            <person name="Bouvet O."/>
            <person name="Calteau A."/>
            <person name="Chiapello H."/>
            <person name="Clermont O."/>
            <person name="Cruveiller S."/>
            <person name="Danchin A."/>
            <person name="Diard M."/>
            <person name="Dossat C."/>
            <person name="Karoui M.E."/>
            <person name="Frapy E."/>
            <person name="Garry L."/>
            <person name="Ghigo J.M."/>
            <person name="Gilles A.M."/>
            <person name="Johnson J."/>
            <person name="Le Bouguenec C."/>
            <person name="Lescat M."/>
            <person name="Mangenot S."/>
            <person name="Martinez-Jehanne V."/>
            <person name="Matic I."/>
            <person name="Nassif X."/>
            <person name="Oztas S."/>
            <person name="Petit M.A."/>
            <person name="Pichon C."/>
            <person name="Rouy Z."/>
            <person name="Ruf C.S."/>
            <person name="Schneider D."/>
            <person name="Tourret J."/>
            <person name="Vacherie B."/>
            <person name="Vallenet D."/>
            <person name="Medigue C."/>
            <person name="Rocha E.P.C."/>
            <person name="Denamur E."/>
        </authorList>
    </citation>
    <scope>NUCLEOTIDE SEQUENCE [LARGE SCALE GENOMIC DNA]</scope>
    <source>
        <strain>ATCC 35469 / DSM 13698 / BCRC 15582 / CCUG 18766 / IAM 14443 / JCM 21226 / LMG 7866 / NBRC 102419 / NCTC 12128 / CDC 0568-73</strain>
    </source>
</reference>
<proteinExistence type="inferred from homology"/>
<sequence length="104" mass="11472">MTNRLVLSGTVCRTPLRKVSPSGIPHCQFVLEHRSVQEEAGFHRQAWCQMPVIVSGHENQAITHSITVGSRITVQGFISCHKAKNGLSKMVLHAEQIELIDSGD</sequence>
<accession>B7LLY3</accession>
<evidence type="ECO:0000255" key="1">
    <source>
        <dbReference type="HAMAP-Rule" id="MF_00720"/>
    </source>
</evidence>
<keyword id="KW-0235">DNA replication</keyword>
<keyword id="KW-0238">DNA-binding</keyword>
<keyword id="KW-0639">Primosome</keyword>
<gene>
    <name evidence="1" type="primary">priB</name>
    <name type="ordered locus">EFER_4254</name>
</gene>
<feature type="chain" id="PRO_1000132624" description="Replication restart protein PriB">
    <location>
        <begin position="1"/>
        <end position="104"/>
    </location>
</feature>
<feature type="domain" description="SSB" evidence="1">
    <location>
        <begin position="1"/>
        <end position="101"/>
    </location>
</feature>